<feature type="chain" id="PRO_1000198254" description="UPF0301 protein Bind_0718">
    <location>
        <begin position="1"/>
        <end position="205"/>
    </location>
</feature>
<organism>
    <name type="scientific">Beijerinckia indica subsp. indica (strain ATCC 9039 / DSM 1715 / NCIMB 8712)</name>
    <dbReference type="NCBI Taxonomy" id="395963"/>
    <lineage>
        <taxon>Bacteria</taxon>
        <taxon>Pseudomonadati</taxon>
        <taxon>Pseudomonadota</taxon>
        <taxon>Alphaproteobacteria</taxon>
        <taxon>Hyphomicrobiales</taxon>
        <taxon>Beijerinckiaceae</taxon>
        <taxon>Beijerinckia</taxon>
    </lineage>
</organism>
<sequence>MISMMSLDSTQSTGAFLDGQLLIAMPNMVDNRFARSVIYLCAHSEEGAMGIVLNRAARKINFPQLLVQLEVIGADEAIRLPNSAETMQVLNGGPVETGRGFVLHSDDFFIDNSTLPIDGGVSLTATIDILRAIAKGSGPHQAILALGYAGWSAGQLEEEIQHNGWLNCPADPSLIFDDALGSKYERALRKVGIDPGYLSSEAGHA</sequence>
<protein>
    <recommendedName>
        <fullName evidence="1">UPF0301 protein Bind_0718</fullName>
    </recommendedName>
</protein>
<name>Y718_BEII9</name>
<gene>
    <name type="ordered locus">Bind_0718</name>
</gene>
<evidence type="ECO:0000255" key="1">
    <source>
        <dbReference type="HAMAP-Rule" id="MF_00758"/>
    </source>
</evidence>
<reference key="1">
    <citation type="journal article" date="2010" name="J. Bacteriol.">
        <title>Complete genome sequence of Beijerinckia indica subsp. indica.</title>
        <authorList>
            <person name="Tamas I."/>
            <person name="Dedysh S.N."/>
            <person name="Liesack W."/>
            <person name="Stott M.B."/>
            <person name="Alam M."/>
            <person name="Murrell J.C."/>
            <person name="Dunfield P.F."/>
        </authorList>
    </citation>
    <scope>NUCLEOTIDE SEQUENCE [LARGE SCALE GENOMIC DNA]</scope>
    <source>
        <strain>ATCC 9039 / DSM 1715 / NCIMB 8712</strain>
    </source>
</reference>
<keyword id="KW-1185">Reference proteome</keyword>
<comment type="similarity">
    <text evidence="1">Belongs to the UPF0301 (AlgH) family.</text>
</comment>
<proteinExistence type="inferred from homology"/>
<accession>B2IGI6</accession>
<dbReference type="EMBL" id="CP001016">
    <property type="protein sequence ID" value="ACB94368.1"/>
    <property type="molecule type" value="Genomic_DNA"/>
</dbReference>
<dbReference type="RefSeq" id="WP_012383725.1">
    <property type="nucleotide sequence ID" value="NC_010581.1"/>
</dbReference>
<dbReference type="SMR" id="B2IGI6"/>
<dbReference type="STRING" id="395963.Bind_0718"/>
<dbReference type="KEGG" id="bid:Bind_0718"/>
<dbReference type="eggNOG" id="COG1678">
    <property type="taxonomic scope" value="Bacteria"/>
</dbReference>
<dbReference type="HOGENOM" id="CLU_057596_1_0_5"/>
<dbReference type="OrthoDB" id="9807486at2"/>
<dbReference type="Proteomes" id="UP000001695">
    <property type="component" value="Chromosome"/>
</dbReference>
<dbReference type="GO" id="GO:0005829">
    <property type="term" value="C:cytosol"/>
    <property type="evidence" value="ECO:0007669"/>
    <property type="project" value="TreeGrafter"/>
</dbReference>
<dbReference type="Gene3D" id="3.40.1740.10">
    <property type="entry name" value="VC0467-like"/>
    <property type="match status" value="1"/>
</dbReference>
<dbReference type="HAMAP" id="MF_00758">
    <property type="entry name" value="UPF0301"/>
    <property type="match status" value="1"/>
</dbReference>
<dbReference type="InterPro" id="IPR003774">
    <property type="entry name" value="AlgH-like"/>
</dbReference>
<dbReference type="NCBIfam" id="NF001268">
    <property type="entry name" value="PRK00228.1-4"/>
    <property type="match status" value="1"/>
</dbReference>
<dbReference type="PANTHER" id="PTHR30327">
    <property type="entry name" value="UNCHARACTERIZED PROTEIN YQGE"/>
    <property type="match status" value="1"/>
</dbReference>
<dbReference type="PANTHER" id="PTHR30327:SF1">
    <property type="entry name" value="UPF0301 PROTEIN YQGE"/>
    <property type="match status" value="1"/>
</dbReference>
<dbReference type="Pfam" id="PF02622">
    <property type="entry name" value="DUF179"/>
    <property type="match status" value="1"/>
</dbReference>
<dbReference type="SUPFAM" id="SSF143456">
    <property type="entry name" value="VC0467-like"/>
    <property type="match status" value="1"/>
</dbReference>